<sequence>MSTHLLEQLIDAFRILPGVGQKTAQRMAYHMLEREREGGQRLADVLSRAIEKIGHCTECRDFSETKICAICANSSRDRHQLCVVESPPDRLAIEQATGYRGLYFILQGRLSPLDGIGPHELGLDHLGQRLAAGEVTELIIATNATVEGETTAHYLALLARQHGIRPSRLAQGLPLGGELEYLDRGTLSHAFGTRTEVV</sequence>
<reference key="1">
    <citation type="journal article" date="2003" name="J. Bacteriol.">
        <title>Comparative analyses of the complete genome sequences of Pierce's disease and citrus variegated chlorosis strains of Xylella fastidiosa.</title>
        <authorList>
            <person name="Van Sluys M.A."/>
            <person name="de Oliveira M.C."/>
            <person name="Monteiro-Vitorello C.B."/>
            <person name="Miyaki C.Y."/>
            <person name="Furlan L.R."/>
            <person name="Camargo L.E.A."/>
            <person name="da Silva A.C.R."/>
            <person name="Moon D.H."/>
            <person name="Takita M.A."/>
            <person name="Lemos E.G.M."/>
            <person name="Machado M.A."/>
            <person name="Ferro M.I.T."/>
            <person name="da Silva F.R."/>
            <person name="Goldman M.H.S."/>
            <person name="Goldman G.H."/>
            <person name="Lemos M.V.F."/>
            <person name="El-Dorry H."/>
            <person name="Tsai S.M."/>
            <person name="Carrer H."/>
            <person name="Carraro D.M."/>
            <person name="de Oliveira R.C."/>
            <person name="Nunes L.R."/>
            <person name="Siqueira W.J."/>
            <person name="Coutinho L.L."/>
            <person name="Kimura E.T."/>
            <person name="Ferro E.S."/>
            <person name="Harakava R."/>
            <person name="Kuramae E.E."/>
            <person name="Marino C.L."/>
            <person name="Giglioti E."/>
            <person name="Abreu I.L."/>
            <person name="Alves L.M.C."/>
            <person name="do Amaral A.M."/>
            <person name="Baia G.S."/>
            <person name="Blanco S.R."/>
            <person name="Brito M.S."/>
            <person name="Cannavan F.S."/>
            <person name="Celestino A.V."/>
            <person name="da Cunha A.F."/>
            <person name="Fenille R.C."/>
            <person name="Ferro J.A."/>
            <person name="Formighieri E.F."/>
            <person name="Kishi L.T."/>
            <person name="Leoni S.G."/>
            <person name="Oliveira A.R."/>
            <person name="Rosa V.E. Jr."/>
            <person name="Sassaki F.T."/>
            <person name="Sena J.A.D."/>
            <person name="de Souza A.A."/>
            <person name="Truffi D."/>
            <person name="Tsukumo F."/>
            <person name="Yanai G.M."/>
            <person name="Zaros L.G."/>
            <person name="Civerolo E.L."/>
            <person name="Simpson A.J.G."/>
            <person name="Almeida N.F. Jr."/>
            <person name="Setubal J.C."/>
            <person name="Kitajima J.P."/>
        </authorList>
    </citation>
    <scope>NUCLEOTIDE SEQUENCE [LARGE SCALE GENOMIC DNA]</scope>
    <source>
        <strain>Temecula1 / ATCC 700964</strain>
    </source>
</reference>
<dbReference type="EMBL" id="AE009442">
    <property type="protein sequence ID" value="AAO28917.1"/>
    <property type="molecule type" value="Genomic_DNA"/>
</dbReference>
<dbReference type="RefSeq" id="WP_011097918.1">
    <property type="nucleotide sequence ID" value="NC_004556.1"/>
</dbReference>
<dbReference type="SMR" id="Q87CK8"/>
<dbReference type="KEGG" id="xft:PD_1057"/>
<dbReference type="HOGENOM" id="CLU_060739_1_2_6"/>
<dbReference type="Proteomes" id="UP000002516">
    <property type="component" value="Chromosome"/>
</dbReference>
<dbReference type="GO" id="GO:0003677">
    <property type="term" value="F:DNA binding"/>
    <property type="evidence" value="ECO:0007669"/>
    <property type="project" value="UniProtKB-UniRule"/>
</dbReference>
<dbReference type="GO" id="GO:0008270">
    <property type="term" value="F:zinc ion binding"/>
    <property type="evidence" value="ECO:0007669"/>
    <property type="project" value="UniProtKB-KW"/>
</dbReference>
<dbReference type="GO" id="GO:0006310">
    <property type="term" value="P:DNA recombination"/>
    <property type="evidence" value="ECO:0007669"/>
    <property type="project" value="UniProtKB-UniRule"/>
</dbReference>
<dbReference type="GO" id="GO:0006281">
    <property type="term" value="P:DNA repair"/>
    <property type="evidence" value="ECO:0007669"/>
    <property type="project" value="UniProtKB-UniRule"/>
</dbReference>
<dbReference type="CDD" id="cd01025">
    <property type="entry name" value="TOPRIM_recR"/>
    <property type="match status" value="1"/>
</dbReference>
<dbReference type="Gene3D" id="3.40.1360.10">
    <property type="match status" value="1"/>
</dbReference>
<dbReference type="Gene3D" id="6.10.250.240">
    <property type="match status" value="1"/>
</dbReference>
<dbReference type="Gene3D" id="1.10.8.420">
    <property type="entry name" value="RecR Domain 1"/>
    <property type="match status" value="1"/>
</dbReference>
<dbReference type="HAMAP" id="MF_00017">
    <property type="entry name" value="RecR"/>
    <property type="match status" value="1"/>
</dbReference>
<dbReference type="InterPro" id="IPR000093">
    <property type="entry name" value="DNA_Rcmb_RecR"/>
</dbReference>
<dbReference type="InterPro" id="IPR023627">
    <property type="entry name" value="Rcmb_RecR"/>
</dbReference>
<dbReference type="InterPro" id="IPR015967">
    <property type="entry name" value="Rcmb_RecR_Znf"/>
</dbReference>
<dbReference type="InterPro" id="IPR006171">
    <property type="entry name" value="TOPRIM_dom"/>
</dbReference>
<dbReference type="InterPro" id="IPR034137">
    <property type="entry name" value="TOPRIM_RecR"/>
</dbReference>
<dbReference type="NCBIfam" id="TIGR00615">
    <property type="entry name" value="recR"/>
    <property type="match status" value="1"/>
</dbReference>
<dbReference type="PANTHER" id="PTHR30446">
    <property type="entry name" value="RECOMBINATION PROTEIN RECR"/>
    <property type="match status" value="1"/>
</dbReference>
<dbReference type="PANTHER" id="PTHR30446:SF0">
    <property type="entry name" value="RECOMBINATION PROTEIN RECR"/>
    <property type="match status" value="1"/>
</dbReference>
<dbReference type="Pfam" id="PF21175">
    <property type="entry name" value="RecR_C"/>
    <property type="match status" value="1"/>
</dbReference>
<dbReference type="Pfam" id="PF21176">
    <property type="entry name" value="RecR_HhH"/>
    <property type="match status" value="1"/>
</dbReference>
<dbReference type="Pfam" id="PF02132">
    <property type="entry name" value="RecR_ZnF"/>
    <property type="match status" value="1"/>
</dbReference>
<dbReference type="Pfam" id="PF13662">
    <property type="entry name" value="Toprim_4"/>
    <property type="match status" value="1"/>
</dbReference>
<dbReference type="SMART" id="SM00493">
    <property type="entry name" value="TOPRIM"/>
    <property type="match status" value="1"/>
</dbReference>
<dbReference type="SUPFAM" id="SSF111304">
    <property type="entry name" value="Recombination protein RecR"/>
    <property type="match status" value="1"/>
</dbReference>
<dbReference type="PROSITE" id="PS01300">
    <property type="entry name" value="RECR"/>
    <property type="match status" value="1"/>
</dbReference>
<dbReference type="PROSITE" id="PS50880">
    <property type="entry name" value="TOPRIM"/>
    <property type="match status" value="1"/>
</dbReference>
<protein>
    <recommendedName>
        <fullName evidence="1">Recombination protein RecR</fullName>
    </recommendedName>
</protein>
<proteinExistence type="inferred from homology"/>
<keyword id="KW-0227">DNA damage</keyword>
<keyword id="KW-0233">DNA recombination</keyword>
<keyword id="KW-0234">DNA repair</keyword>
<keyword id="KW-0479">Metal-binding</keyword>
<keyword id="KW-1185">Reference proteome</keyword>
<keyword id="KW-0862">Zinc</keyword>
<keyword id="KW-0863">Zinc-finger</keyword>
<feature type="chain" id="PRO_0000190431" description="Recombination protein RecR">
    <location>
        <begin position="1"/>
        <end position="198"/>
    </location>
</feature>
<feature type="domain" description="Toprim" evidence="1">
    <location>
        <begin position="79"/>
        <end position="174"/>
    </location>
</feature>
<feature type="zinc finger region" description="C4-type" evidence="1">
    <location>
        <begin position="56"/>
        <end position="71"/>
    </location>
</feature>
<comment type="function">
    <text evidence="1">May play a role in DNA repair. It seems to be involved in an RecBC-independent recombinational process of DNA repair. It may act with RecF and RecO.</text>
</comment>
<comment type="similarity">
    <text evidence="1">Belongs to the RecR family.</text>
</comment>
<name>RECR_XYLFT</name>
<accession>Q87CK8</accession>
<evidence type="ECO:0000255" key="1">
    <source>
        <dbReference type="HAMAP-Rule" id="MF_00017"/>
    </source>
</evidence>
<gene>
    <name evidence="1" type="primary">recR</name>
    <name type="ordered locus">PD_1057</name>
</gene>
<organism>
    <name type="scientific">Xylella fastidiosa (strain Temecula1 / ATCC 700964)</name>
    <dbReference type="NCBI Taxonomy" id="183190"/>
    <lineage>
        <taxon>Bacteria</taxon>
        <taxon>Pseudomonadati</taxon>
        <taxon>Pseudomonadota</taxon>
        <taxon>Gammaproteobacteria</taxon>
        <taxon>Lysobacterales</taxon>
        <taxon>Lysobacteraceae</taxon>
        <taxon>Xylella</taxon>
    </lineage>
</organism>